<protein>
    <recommendedName>
        <fullName>Probable methylmalonyl-CoA mutase small subunit</fullName>
        <shortName>MCM</shortName>
        <ecNumber>5.4.99.2</ecNumber>
    </recommendedName>
</protein>
<organism>
    <name type="scientific">Mycobacterium tuberculosis (strain CDC 1551 / Oshkosh)</name>
    <dbReference type="NCBI Taxonomy" id="83331"/>
    <lineage>
        <taxon>Bacteria</taxon>
        <taxon>Bacillati</taxon>
        <taxon>Actinomycetota</taxon>
        <taxon>Actinomycetes</taxon>
        <taxon>Mycobacteriales</taxon>
        <taxon>Mycobacteriaceae</taxon>
        <taxon>Mycobacterium</taxon>
        <taxon>Mycobacterium tuberculosis complex</taxon>
    </lineage>
</organism>
<name>MUTA_MYCTO</name>
<keyword id="KW-0846">Cobalamin</keyword>
<keyword id="KW-0170">Cobalt</keyword>
<keyword id="KW-0413">Isomerase</keyword>
<keyword id="KW-1185">Reference proteome</keyword>
<dbReference type="EC" id="5.4.99.2"/>
<dbReference type="EMBL" id="AE000516">
    <property type="protein sequence ID" value="AAK45806.1"/>
    <property type="molecule type" value="Genomic_DNA"/>
</dbReference>
<dbReference type="PIR" id="G70711">
    <property type="entry name" value="G70711"/>
</dbReference>
<dbReference type="RefSeq" id="WP_003407585.1">
    <property type="nucleotide sequence ID" value="NZ_KK341227.1"/>
</dbReference>
<dbReference type="SMR" id="P9WJK6"/>
<dbReference type="GeneID" id="45425472"/>
<dbReference type="KEGG" id="mtc:MT1539"/>
<dbReference type="PATRIC" id="fig|83331.31.peg.1656"/>
<dbReference type="HOGENOM" id="CLU_009523_6_0_11"/>
<dbReference type="UniPathway" id="UPA00945">
    <property type="reaction ID" value="UER00910"/>
</dbReference>
<dbReference type="Proteomes" id="UP000001020">
    <property type="component" value="Chromosome"/>
</dbReference>
<dbReference type="GO" id="GO:0031419">
    <property type="term" value="F:cobalamin binding"/>
    <property type="evidence" value="ECO:0007669"/>
    <property type="project" value="UniProtKB-KW"/>
</dbReference>
<dbReference type="GO" id="GO:0046872">
    <property type="term" value="F:metal ion binding"/>
    <property type="evidence" value="ECO:0007669"/>
    <property type="project" value="InterPro"/>
</dbReference>
<dbReference type="GO" id="GO:0004494">
    <property type="term" value="F:methylmalonyl-CoA mutase activity"/>
    <property type="evidence" value="ECO:0007669"/>
    <property type="project" value="UniProtKB-EC"/>
</dbReference>
<dbReference type="GO" id="GO:0019652">
    <property type="term" value="P:lactate fermentation to propionate and acetate"/>
    <property type="evidence" value="ECO:0007669"/>
    <property type="project" value="InterPro"/>
</dbReference>
<dbReference type="CDD" id="cd03677">
    <property type="entry name" value="MM_CoA_mutase_beta"/>
    <property type="match status" value="1"/>
</dbReference>
<dbReference type="Gene3D" id="3.40.50.280">
    <property type="entry name" value="Cobalamin-binding domain"/>
    <property type="match status" value="1"/>
</dbReference>
<dbReference type="Gene3D" id="3.20.20.240">
    <property type="entry name" value="Methylmalonyl-CoA mutase"/>
    <property type="match status" value="1"/>
</dbReference>
<dbReference type="InterPro" id="IPR016176">
    <property type="entry name" value="Cbl-dep_enz_cat"/>
</dbReference>
<dbReference type="InterPro" id="IPR036724">
    <property type="entry name" value="Cobalamin-bd_sf"/>
</dbReference>
<dbReference type="InterPro" id="IPR006099">
    <property type="entry name" value="MeMalonylCoA_mutase_a/b_cat"/>
</dbReference>
<dbReference type="InterPro" id="IPR004608">
    <property type="entry name" value="MMCoA_mutase_b"/>
</dbReference>
<dbReference type="NCBIfam" id="TIGR00642">
    <property type="entry name" value="mmCoA_mut_beta"/>
    <property type="match status" value="1"/>
</dbReference>
<dbReference type="PANTHER" id="PTHR48101:SF1">
    <property type="entry name" value="METHYLMALONYL-COA MUTASE, LARGE SUBUNIT"/>
    <property type="match status" value="1"/>
</dbReference>
<dbReference type="PANTHER" id="PTHR48101">
    <property type="entry name" value="METHYLMALONYL-COA MUTASE, MITOCHONDRIAL-RELATED"/>
    <property type="match status" value="1"/>
</dbReference>
<dbReference type="Pfam" id="PF01642">
    <property type="entry name" value="MM_CoA_mutase"/>
    <property type="match status" value="1"/>
</dbReference>
<dbReference type="SUPFAM" id="SSF52242">
    <property type="entry name" value="Cobalamin (vitamin B12)-binding domain"/>
    <property type="match status" value="1"/>
</dbReference>
<dbReference type="SUPFAM" id="SSF51703">
    <property type="entry name" value="Cobalamin (vitamin B12)-dependent enzymes"/>
    <property type="match status" value="1"/>
</dbReference>
<dbReference type="PROSITE" id="PS00544">
    <property type="entry name" value="METMALONYL_COA_MUTASE"/>
    <property type="match status" value="1"/>
</dbReference>
<proteinExistence type="inferred from homology"/>
<feature type="chain" id="PRO_0000427813" description="Probable methylmalonyl-CoA mutase small subunit">
    <location>
        <begin position="1"/>
        <end position="615"/>
    </location>
</feature>
<reference key="1">
    <citation type="journal article" date="2002" name="J. Bacteriol.">
        <title>Whole-genome comparison of Mycobacterium tuberculosis clinical and laboratory strains.</title>
        <authorList>
            <person name="Fleischmann R.D."/>
            <person name="Alland D."/>
            <person name="Eisen J.A."/>
            <person name="Carpenter L."/>
            <person name="White O."/>
            <person name="Peterson J.D."/>
            <person name="DeBoy R.T."/>
            <person name="Dodson R.J."/>
            <person name="Gwinn M.L."/>
            <person name="Haft D.H."/>
            <person name="Hickey E.K."/>
            <person name="Kolonay J.F."/>
            <person name="Nelson W.C."/>
            <person name="Umayam L.A."/>
            <person name="Ermolaeva M.D."/>
            <person name="Salzberg S.L."/>
            <person name="Delcher A."/>
            <person name="Utterback T.R."/>
            <person name="Weidman J.F."/>
            <person name="Khouri H.M."/>
            <person name="Gill J."/>
            <person name="Mikula A."/>
            <person name="Bishai W."/>
            <person name="Jacobs W.R. Jr."/>
            <person name="Venter J.C."/>
            <person name="Fraser C.M."/>
        </authorList>
    </citation>
    <scope>NUCLEOTIDE SEQUENCE [LARGE SCALE GENOMIC DNA]</scope>
    <source>
        <strain>CDC 1551 / Oshkosh</strain>
    </source>
</reference>
<accession>P9WJK6</accession>
<accession>L0T9S6</accession>
<accession>P65485</accession>
<accession>P71773</accession>
<evidence type="ECO:0000250" key="1"/>
<evidence type="ECO:0000305" key="2"/>
<sequence length="615" mass="64744">MSIDVPERADLEQVRGRWRNAVAGVLSKSNRTDSAQLGDHPERLLDTQTADGFAIRALYTAFDELPEPPLPGQWPFVRGGDPLRDVHSGWKVAEAFPANGATADTNAAVLAALGEGVSALLIRVGESGVAPDRLTALLSGVYLNLAPVILDAGADYRPACDVMLALVAQLDPGQRDTLSIDLGADPLTASLRDRPAPPIEEVVAVASRAAGERGLRAITVDGPAFHNLGATAATELAATVAAAVAYLRVLTESGLVVSDALRQISFRLAADDDQFMTLAKMRALRQLWARVAEVVGDPGGGAAVVHAETSLPMMTQRDPWVNMLRCTLAAFGAGVGGADTVLVHPFDVAIPGGFPGTAAGFARRIARNTQLLLLEESHVGRVLDPAGGSWFVEELTDRLARRAWQRFQAIEARGGFVEAHDFLAGQIAECAARRADDIAHRRLAITGVNEYPNLGEPALPPGDPTSPVRRYAAGFEALRDRSDHHLARTGARPRVLLLPLGPLAEHNIRTTFATNLLASGGIEAIDPGTVDAGTVGNAVADAGSPSVAVICGTDARYRDEVADIVQAARAAGVSRVYLAGPEKALGDAAHRPDEFLTAKINVVQALSNLLTRLGA</sequence>
<gene>
    <name type="primary">mutA</name>
    <name type="ordered locus">MT1539</name>
</gene>
<comment type="function">
    <text evidence="1">Catalyzes the isomerization of succinyl-CoA to methylmalonyl-CoA during synthesis of propionate from tricarboxylic acid-cycle intermediates.</text>
</comment>
<comment type="catalytic activity">
    <reaction>
        <text>(R)-methylmalonyl-CoA = succinyl-CoA</text>
        <dbReference type="Rhea" id="RHEA:22888"/>
        <dbReference type="ChEBI" id="CHEBI:57292"/>
        <dbReference type="ChEBI" id="CHEBI:57326"/>
        <dbReference type="EC" id="5.4.99.2"/>
    </reaction>
</comment>
<comment type="cofactor">
    <cofactor evidence="1">
        <name>adenosylcob(III)alamin</name>
        <dbReference type="ChEBI" id="CHEBI:18408"/>
    </cofactor>
</comment>
<comment type="pathway">
    <text>Metabolic intermediate metabolism; propanoyl-CoA degradation; succinyl-CoA from propanoyl-CoA: step 3/3.</text>
</comment>
<comment type="subunit">
    <text evidence="1">Heterodimer of an alpha and a beta chain.</text>
</comment>
<comment type="similarity">
    <text evidence="2">Belongs to the methylmalonyl-CoA mutase family.</text>
</comment>